<sequence length="99" mass="10649">MRIGVVGDPDVVAGFRLAGLTDVYEVNSPEQAAKAIEELNSNSEIGLIITTERIGEKIRDAISSIKKVVVEVPDKNGPIVRENDPVKVLVRNAVGVDIK</sequence>
<evidence type="ECO:0000255" key="1">
    <source>
        <dbReference type="HAMAP-Rule" id="MF_00312"/>
    </source>
</evidence>
<feature type="chain" id="PRO_1000059434" description="A-type ATP synthase subunit F">
    <location>
        <begin position="1"/>
        <end position="99"/>
    </location>
</feature>
<name>AATF_METMP</name>
<accession>Q6LYE8</accession>
<organism>
    <name type="scientific">Methanococcus maripaludis (strain DSM 14266 / JCM 13030 / NBRC 101832 / S2 / LL)</name>
    <dbReference type="NCBI Taxonomy" id="267377"/>
    <lineage>
        <taxon>Archaea</taxon>
        <taxon>Methanobacteriati</taxon>
        <taxon>Methanobacteriota</taxon>
        <taxon>Methanomada group</taxon>
        <taxon>Methanococci</taxon>
        <taxon>Methanococcales</taxon>
        <taxon>Methanococcaceae</taxon>
        <taxon>Methanococcus</taxon>
    </lineage>
</organism>
<gene>
    <name evidence="1" type="primary">atpF</name>
    <name type="ordered locus">MMP1043</name>
</gene>
<proteinExistence type="inferred from homology"/>
<reference key="1">
    <citation type="journal article" date="2004" name="J. Bacteriol.">
        <title>Complete genome sequence of the genetically tractable hydrogenotrophic methanogen Methanococcus maripaludis.</title>
        <authorList>
            <person name="Hendrickson E.L."/>
            <person name="Kaul R."/>
            <person name="Zhou Y."/>
            <person name="Bovee D."/>
            <person name="Chapman P."/>
            <person name="Chung J."/>
            <person name="Conway de Macario E."/>
            <person name="Dodsworth J.A."/>
            <person name="Gillett W."/>
            <person name="Graham D.E."/>
            <person name="Hackett M."/>
            <person name="Haydock A.K."/>
            <person name="Kang A."/>
            <person name="Land M.L."/>
            <person name="Levy R."/>
            <person name="Lie T.J."/>
            <person name="Major T.A."/>
            <person name="Moore B.C."/>
            <person name="Porat I."/>
            <person name="Palmeiri A."/>
            <person name="Rouse G."/>
            <person name="Saenphimmachak C."/>
            <person name="Soell D."/>
            <person name="Van Dien S."/>
            <person name="Wang T."/>
            <person name="Whitman W.B."/>
            <person name="Xia Q."/>
            <person name="Zhang Y."/>
            <person name="Larimer F.W."/>
            <person name="Olson M.V."/>
            <person name="Leigh J.A."/>
        </authorList>
    </citation>
    <scope>NUCLEOTIDE SEQUENCE [LARGE SCALE GENOMIC DNA]</scope>
    <source>
        <strain>DSM 14266 / JCM 13030 / NBRC 101832 / S2 / LL</strain>
    </source>
</reference>
<protein>
    <recommendedName>
        <fullName evidence="1">A-type ATP synthase subunit F</fullName>
    </recommendedName>
</protein>
<dbReference type="EMBL" id="BX950229">
    <property type="protein sequence ID" value="CAF30599.1"/>
    <property type="molecule type" value="Genomic_DNA"/>
</dbReference>
<dbReference type="RefSeq" id="WP_011170987.1">
    <property type="nucleotide sequence ID" value="NC_005791.1"/>
</dbReference>
<dbReference type="SMR" id="Q6LYE8"/>
<dbReference type="STRING" id="267377.MMP1043"/>
<dbReference type="EnsemblBacteria" id="CAF30599">
    <property type="protein sequence ID" value="CAF30599"/>
    <property type="gene ID" value="MMP1043"/>
</dbReference>
<dbReference type="KEGG" id="mmp:MMP1043"/>
<dbReference type="PATRIC" id="fig|267377.15.peg.1075"/>
<dbReference type="eggNOG" id="arCOG04102">
    <property type="taxonomic scope" value="Archaea"/>
</dbReference>
<dbReference type="HOGENOM" id="CLU_135754_2_0_2"/>
<dbReference type="OrthoDB" id="24971at2157"/>
<dbReference type="Proteomes" id="UP000000590">
    <property type="component" value="Chromosome"/>
</dbReference>
<dbReference type="GO" id="GO:0005886">
    <property type="term" value="C:plasma membrane"/>
    <property type="evidence" value="ECO:0007669"/>
    <property type="project" value="UniProtKB-SubCell"/>
</dbReference>
<dbReference type="GO" id="GO:0005524">
    <property type="term" value="F:ATP binding"/>
    <property type="evidence" value="ECO:0007669"/>
    <property type="project" value="UniProtKB-UniRule"/>
</dbReference>
<dbReference type="GO" id="GO:0046933">
    <property type="term" value="F:proton-transporting ATP synthase activity, rotational mechanism"/>
    <property type="evidence" value="ECO:0007669"/>
    <property type="project" value="UniProtKB-UniRule"/>
</dbReference>
<dbReference type="GO" id="GO:0046961">
    <property type="term" value="F:proton-transporting ATPase activity, rotational mechanism"/>
    <property type="evidence" value="ECO:0007669"/>
    <property type="project" value="InterPro"/>
</dbReference>
<dbReference type="GO" id="GO:0042777">
    <property type="term" value="P:proton motive force-driven plasma membrane ATP synthesis"/>
    <property type="evidence" value="ECO:0007669"/>
    <property type="project" value="UniProtKB-UniRule"/>
</dbReference>
<dbReference type="Gene3D" id="3.40.50.10580">
    <property type="entry name" value="ATPase, V1 complex, subunit F"/>
    <property type="match status" value="1"/>
</dbReference>
<dbReference type="HAMAP" id="MF_00312">
    <property type="entry name" value="ATP_synth_F_arch"/>
    <property type="match status" value="1"/>
</dbReference>
<dbReference type="InterPro" id="IPR008218">
    <property type="entry name" value="ATPase_V1-cplx_f_g_su"/>
</dbReference>
<dbReference type="InterPro" id="IPR022944">
    <property type="entry name" value="ATPase_V1-cplx_fsu_bac/arc"/>
</dbReference>
<dbReference type="InterPro" id="IPR036906">
    <property type="entry name" value="ATPase_V1_fsu_sf"/>
</dbReference>
<dbReference type="NCBIfam" id="NF003047">
    <property type="entry name" value="PRK03957.1"/>
    <property type="match status" value="1"/>
</dbReference>
<dbReference type="Pfam" id="PF01990">
    <property type="entry name" value="ATP-synt_F"/>
    <property type="match status" value="1"/>
</dbReference>
<dbReference type="SUPFAM" id="SSF159468">
    <property type="entry name" value="AtpF-like"/>
    <property type="match status" value="1"/>
</dbReference>
<keyword id="KW-0066">ATP synthesis</keyword>
<keyword id="KW-1003">Cell membrane</keyword>
<keyword id="KW-0375">Hydrogen ion transport</keyword>
<keyword id="KW-0406">Ion transport</keyword>
<keyword id="KW-0472">Membrane</keyword>
<keyword id="KW-1185">Reference proteome</keyword>
<keyword id="KW-0813">Transport</keyword>
<comment type="function">
    <text evidence="1">Component of the A-type ATP synthase that produces ATP from ADP in the presence of a proton gradient across the membrane.</text>
</comment>
<comment type="subunit">
    <text evidence="1">Has multiple subunits with at least A(3), B(3), C, D, E, F, H, I and proteolipid K(x).</text>
</comment>
<comment type="subcellular location">
    <subcellularLocation>
        <location evidence="1">Cell membrane</location>
        <topology evidence="1">Peripheral membrane protein</topology>
    </subcellularLocation>
</comment>
<comment type="similarity">
    <text evidence="1">Belongs to the V-ATPase F subunit family.</text>
</comment>